<keyword id="KW-0520">NAD</keyword>
<keyword id="KW-0560">Oxidoreductase</keyword>
<sequence length="258" mass="27968">MGLSGKNVIFVGGLGFIGYEACKQLMAKNMASFFVFDVLDKPEDIKALQALNPKTKVYYTKFDITSKQSIKSALADVVSKVKYIDALINGAGILTDLNVELTMNINLIGLINTTLEGLPLMDKNKQGRGGVIVNIASVLGLEPCPPAAAYCASKFGVMGFSRSIGDPYYYNITGVAVVTFCPGLTETPLKNNIGSKYTFEYSKKISEELNNTKTQKPEVCGAHLAQVVESHENGGIYISNQGTLAKVTPTVYWQPTYH</sequence>
<gene>
    <name type="primary">ADH2</name>
</gene>
<accession>Q70UP6</accession>
<comment type="catalytic activity">
    <reaction evidence="2">
        <text>a primary alcohol + NAD(+) = an aldehyde + NADH + H(+)</text>
        <dbReference type="Rhea" id="RHEA:10736"/>
        <dbReference type="ChEBI" id="CHEBI:15378"/>
        <dbReference type="ChEBI" id="CHEBI:15734"/>
        <dbReference type="ChEBI" id="CHEBI:17478"/>
        <dbReference type="ChEBI" id="CHEBI:57540"/>
        <dbReference type="ChEBI" id="CHEBI:57945"/>
        <dbReference type="EC" id="1.1.1.1"/>
    </reaction>
</comment>
<comment type="catalytic activity">
    <reaction evidence="2">
        <text>a secondary alcohol + NAD(+) = a ketone + NADH + H(+)</text>
        <dbReference type="Rhea" id="RHEA:10740"/>
        <dbReference type="ChEBI" id="CHEBI:15378"/>
        <dbReference type="ChEBI" id="CHEBI:17087"/>
        <dbReference type="ChEBI" id="CHEBI:35681"/>
        <dbReference type="ChEBI" id="CHEBI:57540"/>
        <dbReference type="ChEBI" id="CHEBI:57945"/>
        <dbReference type="EC" id="1.1.1.1"/>
    </reaction>
</comment>
<comment type="subunit">
    <text evidence="1">Homodimer.</text>
</comment>
<comment type="similarity">
    <text evidence="3">Belongs to the short-chain dehydrogenases/reductases (SDR) family.</text>
</comment>
<feature type="chain" id="PRO_0000277840" description="Alcohol dehydrogenase 2">
    <location>
        <begin position="1"/>
        <end position="258"/>
    </location>
</feature>
<feature type="active site" description="Proton acceptor" evidence="2">
    <location>
        <position position="150"/>
    </location>
</feature>
<feature type="binding site" evidence="1">
    <location>
        <begin position="9"/>
        <end position="33"/>
    </location>
    <ligand>
        <name>NAD(+)</name>
        <dbReference type="ChEBI" id="CHEBI:57540"/>
    </ligand>
</feature>
<feature type="binding site" evidence="1">
    <location>
        <position position="137"/>
    </location>
    <ligand>
        <name>substrate</name>
    </ligand>
</feature>
<dbReference type="EC" id="1.1.1.1"/>
<dbReference type="EMBL" id="AJ539539">
    <property type="protein sequence ID" value="CAD62451.1"/>
    <property type="molecule type" value="Genomic_DNA"/>
</dbReference>
<dbReference type="SMR" id="Q70UP6"/>
<dbReference type="GO" id="GO:0005737">
    <property type="term" value="C:cytoplasm"/>
    <property type="evidence" value="ECO:0007669"/>
    <property type="project" value="TreeGrafter"/>
</dbReference>
<dbReference type="GO" id="GO:0004022">
    <property type="term" value="F:alcohol dehydrogenase (NAD+) activity"/>
    <property type="evidence" value="ECO:0000250"/>
    <property type="project" value="UniProtKB"/>
</dbReference>
<dbReference type="CDD" id="cd05323">
    <property type="entry name" value="ADH_SDR_c_like"/>
    <property type="match status" value="1"/>
</dbReference>
<dbReference type="FunFam" id="3.40.50.720:FF:000149">
    <property type="entry name" value="15-hydroxyprostaglandin dehydrogenase [NAD(+)]"/>
    <property type="match status" value="1"/>
</dbReference>
<dbReference type="Gene3D" id="3.40.50.720">
    <property type="entry name" value="NAD(P)-binding Rossmann-like Domain"/>
    <property type="match status" value="1"/>
</dbReference>
<dbReference type="InterPro" id="IPR002426">
    <property type="entry name" value="ADH_Ceratitis-type"/>
</dbReference>
<dbReference type="InterPro" id="IPR036291">
    <property type="entry name" value="NAD(P)-bd_dom_sf"/>
</dbReference>
<dbReference type="InterPro" id="IPR020904">
    <property type="entry name" value="Sc_DH/Rdtase_CS"/>
</dbReference>
<dbReference type="InterPro" id="IPR002347">
    <property type="entry name" value="SDR_fam"/>
</dbReference>
<dbReference type="PANTHER" id="PTHR44229">
    <property type="entry name" value="15-HYDROXYPROSTAGLANDIN DEHYDROGENASE [NAD(+)]"/>
    <property type="match status" value="1"/>
</dbReference>
<dbReference type="PANTHER" id="PTHR44229:SF8">
    <property type="entry name" value="ALCOHOL DEHYDROGENASE-RELATED"/>
    <property type="match status" value="1"/>
</dbReference>
<dbReference type="Pfam" id="PF00106">
    <property type="entry name" value="adh_short"/>
    <property type="match status" value="1"/>
</dbReference>
<dbReference type="PRINTS" id="PR01169">
    <property type="entry name" value="CERATITISADH"/>
</dbReference>
<dbReference type="PRINTS" id="PR01167">
    <property type="entry name" value="INSADHFAMILY"/>
</dbReference>
<dbReference type="PRINTS" id="PR00080">
    <property type="entry name" value="SDRFAMILY"/>
</dbReference>
<dbReference type="SUPFAM" id="SSF51735">
    <property type="entry name" value="NAD(P)-binding Rossmann-fold domains"/>
    <property type="match status" value="1"/>
</dbReference>
<dbReference type="PROSITE" id="PS00061">
    <property type="entry name" value="ADH_SHORT"/>
    <property type="match status" value="1"/>
</dbReference>
<proteinExistence type="inferred from homology"/>
<reference key="1">
    <citation type="journal article" date="2003" name="J. Mol. Evol.">
        <title>Exploring the evolutionary history of the alcohol dehydrogenase gene (Adh) duplication in species of the family tephritidae.</title>
        <authorList>
            <person name="Goulielmos G.N."/>
            <person name="Loukas M."/>
            <person name="Bondinas G."/>
            <person name="Zouros E."/>
        </authorList>
    </citation>
    <scope>NUCLEOTIDE SEQUENCE [GENOMIC DNA]</scope>
</reference>
<organism>
    <name type="scientific">Ceratitis rosa</name>
    <name type="common">Natal fruit fly</name>
    <name type="synonym">Pterandrus rosa</name>
    <dbReference type="NCBI Taxonomy" id="56958"/>
    <lineage>
        <taxon>Eukaryota</taxon>
        <taxon>Metazoa</taxon>
        <taxon>Ecdysozoa</taxon>
        <taxon>Arthropoda</taxon>
        <taxon>Hexapoda</taxon>
        <taxon>Insecta</taxon>
        <taxon>Pterygota</taxon>
        <taxon>Neoptera</taxon>
        <taxon>Endopterygota</taxon>
        <taxon>Diptera</taxon>
        <taxon>Brachycera</taxon>
        <taxon>Muscomorpha</taxon>
        <taxon>Tephritoidea</taxon>
        <taxon>Tephritidae</taxon>
        <taxon>Ceratitis</taxon>
        <taxon>Pterandrus</taxon>
    </lineage>
</organism>
<evidence type="ECO:0000250" key="1"/>
<evidence type="ECO:0000255" key="2">
    <source>
        <dbReference type="PROSITE-ProRule" id="PRU10001"/>
    </source>
</evidence>
<evidence type="ECO:0000305" key="3"/>
<protein>
    <recommendedName>
        <fullName>Alcohol dehydrogenase 2</fullName>
        <ecNumber>1.1.1.1</ecNumber>
    </recommendedName>
</protein>
<name>ADH2_CERRO</name>